<keyword id="KW-1003">Cell membrane</keyword>
<keyword id="KW-0472">Membrane</keyword>
<keyword id="KW-1185">Reference proteome</keyword>
<keyword id="KW-0812">Transmembrane</keyword>
<keyword id="KW-1133">Transmembrane helix</keyword>
<evidence type="ECO:0000255" key="1"/>
<evidence type="ECO:0000305" key="2"/>
<gene>
    <name type="ordered locus">MJ0585</name>
</gene>
<protein>
    <recommendedName>
        <fullName>Uncharacterized protein MJ0585</fullName>
    </recommendedName>
</protein>
<organism>
    <name type="scientific">Methanocaldococcus jannaschii (strain ATCC 43067 / DSM 2661 / JAL-1 / JCM 10045 / NBRC 100440)</name>
    <name type="common">Methanococcus jannaschii</name>
    <dbReference type="NCBI Taxonomy" id="243232"/>
    <lineage>
        <taxon>Archaea</taxon>
        <taxon>Methanobacteriati</taxon>
        <taxon>Methanobacteriota</taxon>
        <taxon>Methanomada group</taxon>
        <taxon>Methanococci</taxon>
        <taxon>Methanococcales</taxon>
        <taxon>Methanocaldococcaceae</taxon>
        <taxon>Methanocaldococcus</taxon>
    </lineage>
</organism>
<dbReference type="EMBL" id="L77117">
    <property type="protein sequence ID" value="AAB98583.1"/>
    <property type="molecule type" value="Genomic_DNA"/>
</dbReference>
<dbReference type="PIR" id="A64373">
    <property type="entry name" value="A64373"/>
</dbReference>
<dbReference type="RefSeq" id="WP_010870089.1">
    <property type="nucleotide sequence ID" value="NC_000909.1"/>
</dbReference>
<dbReference type="SMR" id="Q58005"/>
<dbReference type="STRING" id="243232.MJ_0585"/>
<dbReference type="PaxDb" id="243232-MJ_0585"/>
<dbReference type="EnsemblBacteria" id="AAB98583">
    <property type="protein sequence ID" value="AAB98583"/>
    <property type="gene ID" value="MJ_0585"/>
</dbReference>
<dbReference type="GeneID" id="1451450"/>
<dbReference type="KEGG" id="mja:MJ_0585"/>
<dbReference type="eggNOG" id="ENOG502N58T">
    <property type="taxonomic scope" value="Archaea"/>
</dbReference>
<dbReference type="HOGENOM" id="CLU_1335056_0_0_2"/>
<dbReference type="InParanoid" id="Q58005"/>
<dbReference type="Proteomes" id="UP000000805">
    <property type="component" value="Chromosome"/>
</dbReference>
<dbReference type="GO" id="GO:0005886">
    <property type="term" value="C:plasma membrane"/>
    <property type="evidence" value="ECO:0007669"/>
    <property type="project" value="UniProtKB-SubCell"/>
</dbReference>
<accession>Q58005</accession>
<name>Y585_METJA</name>
<sequence length="205" mass="24327">MKKLAFLILLIVFSNLSLVNAIDDNISNYSKEINELTVKLKELESKNPNDERIEEYKEKLKQLIEKQHELKSQNLKYNETLAYIQSEEYWKMQEEIWEYNNKVMKWFIAISILILGIILATLWILRKDKFLLFLAIFGLIVPFLQFKIPNWLFNILALPLFVYIKFIVPECAEGSFYYSPLITIPISMYGWILIGLAVKFIIKKY</sequence>
<reference key="1">
    <citation type="journal article" date="1996" name="Science">
        <title>Complete genome sequence of the methanogenic archaeon, Methanococcus jannaschii.</title>
        <authorList>
            <person name="Bult C.J."/>
            <person name="White O."/>
            <person name="Olsen G.J."/>
            <person name="Zhou L."/>
            <person name="Fleischmann R.D."/>
            <person name="Sutton G.G."/>
            <person name="Blake J.A."/>
            <person name="FitzGerald L.M."/>
            <person name="Clayton R.A."/>
            <person name="Gocayne J.D."/>
            <person name="Kerlavage A.R."/>
            <person name="Dougherty B.A."/>
            <person name="Tomb J.-F."/>
            <person name="Adams M.D."/>
            <person name="Reich C.I."/>
            <person name="Overbeek R."/>
            <person name="Kirkness E.F."/>
            <person name="Weinstock K.G."/>
            <person name="Merrick J.M."/>
            <person name="Glodek A."/>
            <person name="Scott J.L."/>
            <person name="Geoghagen N.S.M."/>
            <person name="Weidman J.F."/>
            <person name="Fuhrmann J.L."/>
            <person name="Nguyen D."/>
            <person name="Utterback T.R."/>
            <person name="Kelley J.M."/>
            <person name="Peterson J.D."/>
            <person name="Sadow P.W."/>
            <person name="Hanna M.C."/>
            <person name="Cotton M.D."/>
            <person name="Roberts K.M."/>
            <person name="Hurst M.A."/>
            <person name="Kaine B.P."/>
            <person name="Borodovsky M."/>
            <person name="Klenk H.-P."/>
            <person name="Fraser C.M."/>
            <person name="Smith H.O."/>
            <person name="Woese C.R."/>
            <person name="Venter J.C."/>
        </authorList>
    </citation>
    <scope>NUCLEOTIDE SEQUENCE [LARGE SCALE GENOMIC DNA]</scope>
    <source>
        <strain>ATCC 43067 / DSM 2661 / JAL-1 / JCM 10045 / NBRC 100440</strain>
    </source>
</reference>
<feature type="chain" id="PRO_0000106945" description="Uncharacterized protein MJ0585">
    <location>
        <begin position="1"/>
        <end position="205"/>
    </location>
</feature>
<feature type="transmembrane region" description="Helical" evidence="1">
    <location>
        <begin position="4"/>
        <end position="24"/>
    </location>
</feature>
<feature type="transmembrane region" description="Helical" evidence="1">
    <location>
        <begin position="105"/>
        <end position="125"/>
    </location>
</feature>
<feature type="transmembrane region" description="Helical" evidence="1">
    <location>
        <begin position="130"/>
        <end position="150"/>
    </location>
</feature>
<feature type="transmembrane region" description="Helical" evidence="1">
    <location>
        <begin position="151"/>
        <end position="171"/>
    </location>
</feature>
<feature type="transmembrane region" description="Helical" evidence="1">
    <location>
        <begin position="182"/>
        <end position="202"/>
    </location>
</feature>
<proteinExistence type="predicted"/>
<comment type="subcellular location">
    <subcellularLocation>
        <location evidence="2">Cell membrane</location>
        <topology evidence="2">Multi-pass membrane protein</topology>
    </subcellularLocation>
</comment>